<organism>
    <name type="scientific">Xenopus laevis</name>
    <name type="common">African clawed frog</name>
    <dbReference type="NCBI Taxonomy" id="8355"/>
    <lineage>
        <taxon>Eukaryota</taxon>
        <taxon>Metazoa</taxon>
        <taxon>Chordata</taxon>
        <taxon>Craniata</taxon>
        <taxon>Vertebrata</taxon>
        <taxon>Euteleostomi</taxon>
        <taxon>Amphibia</taxon>
        <taxon>Batrachia</taxon>
        <taxon>Anura</taxon>
        <taxon>Pipoidea</taxon>
        <taxon>Pipidae</taxon>
        <taxon>Xenopodinae</taxon>
        <taxon>Xenopus</taxon>
        <taxon>Xenopus</taxon>
    </lineage>
</organism>
<evidence type="ECO:0000250" key="1"/>
<evidence type="ECO:0000250" key="2">
    <source>
        <dbReference type="UniProtKB" id="P06493"/>
    </source>
</evidence>
<evidence type="ECO:0000250" key="3">
    <source>
        <dbReference type="UniProtKB" id="P11440"/>
    </source>
</evidence>
<evidence type="ECO:0000250" key="4">
    <source>
        <dbReference type="UniProtKB" id="P13863"/>
    </source>
</evidence>
<evidence type="ECO:0000255" key="5">
    <source>
        <dbReference type="PROSITE-ProRule" id="PRU00159"/>
    </source>
</evidence>
<evidence type="ECO:0000255" key="6">
    <source>
        <dbReference type="PROSITE-ProRule" id="PRU10027"/>
    </source>
</evidence>
<evidence type="ECO:0000269" key="7">
    <source>
    </source>
</evidence>
<evidence type="ECO:0000269" key="8">
    <source>
    </source>
</evidence>
<evidence type="ECO:0000269" key="9">
    <source>
    </source>
</evidence>
<evidence type="ECO:0000269" key="10">
    <source>
    </source>
</evidence>
<evidence type="ECO:0000269" key="11">
    <source>
    </source>
</evidence>
<evidence type="ECO:0000269" key="12">
    <source>
    </source>
</evidence>
<evidence type="ECO:0000305" key="13"/>
<proteinExistence type="evidence at protein level"/>
<protein>
    <recommendedName>
        <fullName>Cyclin-dependent kinase 1-B</fullName>
        <shortName>CDK1-B</shortName>
        <ecNumber evidence="2">2.7.11.22</ecNumber>
        <ecNumber evidence="3">2.7.11.23</ecNumber>
    </recommendedName>
    <alternativeName>
        <fullName>Cell division control protein 2 homolog 2</fullName>
    </alternativeName>
    <alternativeName>
        <fullName>Cell division control protein 2-B</fullName>
    </alternativeName>
    <alternativeName>
        <fullName>Cell division protein kinase 1</fullName>
    </alternativeName>
    <alternativeName>
        <fullName>p34 protein kinase 2</fullName>
    </alternativeName>
</protein>
<comment type="function">
    <text evidence="2 4">Plays a key role in the control of the eukaryotic cell cycle by modulating the centrosome cycle as well as mitotic onset; promotes G2-M transition via association with multiple interphase cyclins (By similarity). During G2 and early mitosis, CDC25A/B/C-mediated dephosphorylation activates CDK1/cyclin complexes which phosphorylate several substrates that trigger at least centrosome separation, Golgi dynamics, nuclear envelope breakdown and chromosome condensation. Once chromosomes are condensed and aligned at the metaphase plate, CDK1 activity is switched off by WEE1- and PKMYT1-mediated phosphorylation to allow sister chromatid separation, chromosome decondensation, reformation of the nuclear envelope and cytokinesis (By similarity). Catalyzes lamin (LMNA, LMNB1 and LMNB2) phosphorylation at the onset of mitosis, promoting nuclear envelope breakdown (By similarity).</text>
</comment>
<comment type="catalytic activity">
    <reaction evidence="2">
        <text>L-seryl-[protein] + ATP = O-phospho-L-seryl-[protein] + ADP + H(+)</text>
        <dbReference type="Rhea" id="RHEA:17989"/>
        <dbReference type="Rhea" id="RHEA-COMP:9863"/>
        <dbReference type="Rhea" id="RHEA-COMP:11604"/>
        <dbReference type="ChEBI" id="CHEBI:15378"/>
        <dbReference type="ChEBI" id="CHEBI:29999"/>
        <dbReference type="ChEBI" id="CHEBI:30616"/>
        <dbReference type="ChEBI" id="CHEBI:83421"/>
        <dbReference type="ChEBI" id="CHEBI:456216"/>
        <dbReference type="EC" id="2.7.11.22"/>
    </reaction>
</comment>
<comment type="catalytic activity">
    <reaction evidence="2">
        <text>L-threonyl-[protein] + ATP = O-phospho-L-threonyl-[protein] + ADP + H(+)</text>
        <dbReference type="Rhea" id="RHEA:46608"/>
        <dbReference type="Rhea" id="RHEA-COMP:11060"/>
        <dbReference type="Rhea" id="RHEA-COMP:11605"/>
        <dbReference type="ChEBI" id="CHEBI:15378"/>
        <dbReference type="ChEBI" id="CHEBI:30013"/>
        <dbReference type="ChEBI" id="CHEBI:30616"/>
        <dbReference type="ChEBI" id="CHEBI:61977"/>
        <dbReference type="ChEBI" id="CHEBI:456216"/>
        <dbReference type="EC" id="2.7.11.22"/>
    </reaction>
</comment>
<comment type="catalytic activity">
    <reaction evidence="3">
        <text>[DNA-directed RNA polymerase] + ATP = phospho-[DNA-directed RNA polymerase] + ADP + H(+)</text>
        <dbReference type="Rhea" id="RHEA:10216"/>
        <dbReference type="Rhea" id="RHEA-COMP:11321"/>
        <dbReference type="Rhea" id="RHEA-COMP:11322"/>
        <dbReference type="ChEBI" id="CHEBI:15378"/>
        <dbReference type="ChEBI" id="CHEBI:30616"/>
        <dbReference type="ChEBI" id="CHEBI:43176"/>
        <dbReference type="ChEBI" id="CHEBI:68546"/>
        <dbReference type="ChEBI" id="CHEBI:456216"/>
        <dbReference type="EC" id="2.7.11.23"/>
    </reaction>
</comment>
<comment type="activity regulation">
    <text evidence="8">Phosphorylation at Thr-14 or Tyr-15 inactivates the enzyme, while phosphorylation at Thr-161 activates it.</text>
</comment>
<comment type="subunit">
    <text evidence="7 8 9">Forms a stable but non-covalent complex with a regulatory subunit and with a cyclin. Interacts with spdya.</text>
</comment>
<comment type="subcellular location">
    <subcellularLocation>
        <location evidence="2">Nucleus</location>
    </subcellularLocation>
</comment>
<comment type="PTM">
    <text evidence="10 11 12">Phosphorylation at Tyr-15 by wee1 and wee2 inhibits the protein kinase activity and acts negative regulator of entry into mitosis (G2 to M transition).</text>
</comment>
<comment type="similarity">
    <text evidence="13">Belongs to the protein kinase superfamily. CMGC Ser/Thr protein kinase family. CDC2/CDKX subfamily.</text>
</comment>
<sequence length="302" mass="34532">MDEYTKIEKIGEGTYGVVYKGRHKATGQVVAMKKIRLENEEEGVPSTAIREISLLKELQHPNIVCLLDVLMQDSRLYLIFEFLSMDLKKYLDSIPSGQYIDTMLVKSYLYQILQGIVFCHSRRVLHRDLKPQNLLIDNKGVIKLADFGLARAFGIPVRVYTHEVVTLWYRASEVLLGSVRYSTPVDVWSVGTIFAEIATKKPLFHGDSEIDQLFRIFRSLGTPNNEVWPEVESLQDYKNTFPKWKGGSLSSNVKNIDEDGLDLLSKMLVYDPAKRISARKAMLHPYFDDLDKSSLPANQIRN</sequence>
<gene>
    <name type="primary">cdk1-b</name>
    <name type="synonym">cdc2</name>
    <name type="synonym">cdc2x1.2</name>
</gene>
<accession>P24033</accession>
<accession>Q7SZ44</accession>
<feature type="chain" id="PRO_0000085736" description="Cyclin-dependent kinase 1-B">
    <location>
        <begin position="1"/>
        <end position="302"/>
    </location>
</feature>
<feature type="domain" description="Protein kinase" evidence="5">
    <location>
        <begin position="4"/>
        <end position="287"/>
    </location>
</feature>
<feature type="active site" description="Proton acceptor" evidence="5 6">
    <location>
        <position position="128"/>
    </location>
</feature>
<feature type="binding site" evidence="5">
    <location>
        <begin position="10"/>
        <end position="18"/>
    </location>
    <ligand>
        <name>ATP</name>
        <dbReference type="ChEBI" id="CHEBI:30616"/>
    </ligand>
</feature>
<feature type="binding site" evidence="5">
    <location>
        <position position="33"/>
    </location>
    <ligand>
        <name>ATP</name>
        <dbReference type="ChEBI" id="CHEBI:30616"/>
    </ligand>
</feature>
<feature type="modified residue" description="Phosphothreonine" evidence="1">
    <location>
        <position position="14"/>
    </location>
</feature>
<feature type="modified residue" description="Phosphotyrosine; by wee1 and wee2" evidence="10 12">
    <location>
        <position position="15"/>
    </location>
</feature>
<feature type="modified residue" description="Phosphothreonine; by cak" evidence="11">
    <location>
        <position position="161"/>
    </location>
</feature>
<feature type="modified residue" description="Phosphoserine" evidence="2">
    <location>
        <position position="277"/>
    </location>
</feature>
<feature type="sequence conflict" description="In Ref. 1; AAA63562." evidence="13" ref="1">
    <original>L</original>
    <variation>V</variation>
    <location>
        <position position="87"/>
    </location>
</feature>
<feature type="sequence conflict" description="In Ref. 1; AAA63562." evidence="13" ref="1">
    <original>R</original>
    <variation>G</variation>
    <location>
        <position position="123"/>
    </location>
</feature>
<feature type="sequence conflict" description="In Ref. 1; AAA63562." evidence="13" ref="1">
    <original>S</original>
    <variation>P</variation>
    <location>
        <position position="172"/>
    </location>
</feature>
<reference key="1">
    <citation type="journal article" date="1992" name="Mol. Cell. Biol.">
        <title>Requirement of mosXe protein kinase for meiotic maturation of Xenopus oocytes induced by a cdc2 mutant lacking regulatory phosphorylation sites.</title>
        <authorList>
            <person name="Pickham K.M."/>
            <person name="Meyer A.N."/>
            <person name="Li J."/>
            <person name="Donoghue D.J."/>
        </authorList>
    </citation>
    <scope>NUCLEOTIDE SEQUENCE [MRNA]</scope>
    <scope>ACTIVITY REGULATION</scope>
    <scope>SUBUNIT</scope>
    <source>
        <tissue>Oocyte</tissue>
    </source>
</reference>
<reference key="2">
    <citation type="submission" date="2003-06" db="EMBL/GenBank/DDBJ databases">
        <authorList>
            <consortium name="NIH - Xenopus Gene Collection (XGC) project"/>
        </authorList>
    </citation>
    <scope>NUCLEOTIDE SEQUENCE [LARGE SCALE MRNA]</scope>
    <source>
        <tissue>Tadpole</tissue>
    </source>
</reference>
<reference key="3">
    <citation type="journal article" date="1993" name="EMBO J.">
        <title>The MO15 gene encodes the catalytic subunit of a protein kinase that activates cdc2 and other cyclin-dependent kinases (CDKs) through phosphorylation of Thr161 and its homologues.</title>
        <authorList>
            <person name="Fesquet D."/>
            <person name="Labbe J.-C."/>
            <person name="Derancourt J."/>
            <person name="Capony J.-P."/>
            <person name="Galas S."/>
            <person name="Girard F."/>
            <person name="Lorca T."/>
            <person name="Shuttleworth J."/>
            <person name="Doree M."/>
            <person name="Cavadore J.-C."/>
        </authorList>
    </citation>
    <scope>PHOSPHORYLATION AT THR-161</scope>
</reference>
<reference key="4">
    <citation type="journal article" date="1995" name="Mol. Biol. Cell">
        <title>Cell cycle regulation of a Xenopus Wee1-like kinase.</title>
        <authorList>
            <person name="Mueller P.R."/>
            <person name="Coleman T.R."/>
            <person name="Dunphy W.G."/>
        </authorList>
    </citation>
    <scope>PHOSPHORYLATION AT TYR-15</scope>
</reference>
<reference key="5">
    <citation type="journal article" date="1998" name="Development">
        <title>Analysis of the early embryonic cell cycles of Xenopus; regulation of cell cycle length by Xe-wee1 and Mos.</title>
        <authorList>
            <person name="Murakami M.S."/>
            <person name="Vande Woude G.F."/>
        </authorList>
    </citation>
    <scope>PHOSPHORYLATION AT TYR-15</scope>
</reference>
<reference key="6">
    <citation type="journal article" date="1999" name="Genes Dev.">
        <title>A novel p34cdc2 binding and activating protein that is necessary and sufficient to trigger G2/M progression in Xenopus oocytes.</title>
        <authorList>
            <person name="Ferby I."/>
            <person name="Blazquez M."/>
            <person name="Palmer A."/>
            <person name="Eritja R."/>
            <person name="Nebreda A.R."/>
        </authorList>
    </citation>
    <scope>INTERACTION WITH SPDYA</scope>
</reference>
<reference key="7">
    <citation type="journal article" date="2005" name="Cell Cycle">
        <title>Identification and comparative analysis of multiple mammalian Speedy/Ringo proteins.</title>
        <authorList>
            <person name="Cheng A."/>
            <person name="Xiong W."/>
            <person name="Ferrell J.E. Jr."/>
            <person name="Solomon M.J."/>
        </authorList>
    </citation>
    <scope>INTERACTION WITH SPDYA</scope>
</reference>
<name>CDK1B_XENLA</name>
<keyword id="KW-0067">ATP-binding</keyword>
<keyword id="KW-0131">Cell cycle</keyword>
<keyword id="KW-0132">Cell division</keyword>
<keyword id="KW-0418">Kinase</keyword>
<keyword id="KW-0498">Mitosis</keyword>
<keyword id="KW-0547">Nucleotide-binding</keyword>
<keyword id="KW-0539">Nucleus</keyword>
<keyword id="KW-0597">Phosphoprotein</keyword>
<keyword id="KW-1185">Reference proteome</keyword>
<keyword id="KW-0723">Serine/threonine-protein kinase</keyword>
<keyword id="KW-0808">Transferase</keyword>
<dbReference type="EC" id="2.7.11.22" evidence="2"/>
<dbReference type="EC" id="2.7.11.23" evidence="3"/>
<dbReference type="EMBL" id="M60681">
    <property type="protein sequence ID" value="AAA63562.1"/>
    <property type="molecule type" value="mRNA"/>
</dbReference>
<dbReference type="EMBL" id="BC054146">
    <property type="protein sequence ID" value="AAH54146.1"/>
    <property type="molecule type" value="mRNA"/>
</dbReference>
<dbReference type="PIR" id="B44349">
    <property type="entry name" value="B44349"/>
</dbReference>
<dbReference type="RefSeq" id="NP_001080093.1">
    <property type="nucleotide sequence ID" value="NM_001086624.1"/>
</dbReference>
<dbReference type="SMR" id="P24033"/>
<dbReference type="BioGRID" id="98027">
    <property type="interactions" value="3"/>
</dbReference>
<dbReference type="iPTMnet" id="P24033"/>
<dbReference type="DNASU" id="379785"/>
<dbReference type="GeneID" id="379785"/>
<dbReference type="KEGG" id="xla:379785"/>
<dbReference type="AGR" id="Xenbase:XB-GENE-6254942"/>
<dbReference type="CTD" id="379785"/>
<dbReference type="Xenbase" id="XB-GENE-6254942">
    <property type="gene designation" value="cdk1.L"/>
</dbReference>
<dbReference type="OrthoDB" id="1732493at2759"/>
<dbReference type="BRENDA" id="2.7.11.22">
    <property type="organism ID" value="6725"/>
</dbReference>
<dbReference type="Proteomes" id="UP000186698">
    <property type="component" value="Chromosome 7L"/>
</dbReference>
<dbReference type="Bgee" id="379785">
    <property type="expression patterns" value="Expressed in ovary and 19 other cell types or tissues"/>
</dbReference>
<dbReference type="GO" id="GO:0005829">
    <property type="term" value="C:cytosol"/>
    <property type="evidence" value="ECO:0000304"/>
    <property type="project" value="Reactome"/>
</dbReference>
<dbReference type="GO" id="GO:0005634">
    <property type="term" value="C:nucleus"/>
    <property type="evidence" value="ECO:0000318"/>
    <property type="project" value="GO_Central"/>
</dbReference>
<dbReference type="GO" id="GO:0005524">
    <property type="term" value="F:ATP binding"/>
    <property type="evidence" value="ECO:0007669"/>
    <property type="project" value="UniProtKB-KW"/>
</dbReference>
<dbReference type="GO" id="GO:0004693">
    <property type="term" value="F:cyclin-dependent protein serine/threonine kinase activity"/>
    <property type="evidence" value="ECO:0000250"/>
    <property type="project" value="UniProtKB"/>
</dbReference>
<dbReference type="GO" id="GO:0106310">
    <property type="term" value="F:protein serine kinase activity"/>
    <property type="evidence" value="ECO:0007669"/>
    <property type="project" value="RHEA"/>
</dbReference>
<dbReference type="GO" id="GO:0004674">
    <property type="term" value="F:protein serine/threonine kinase activity"/>
    <property type="evidence" value="ECO:0000314"/>
    <property type="project" value="UniProtKB"/>
</dbReference>
<dbReference type="GO" id="GO:0008353">
    <property type="term" value="F:RNA polymerase II CTD heptapeptide repeat kinase activity"/>
    <property type="evidence" value="ECO:0007669"/>
    <property type="project" value="UniProtKB-EC"/>
</dbReference>
<dbReference type="GO" id="GO:0051301">
    <property type="term" value="P:cell division"/>
    <property type="evidence" value="ECO:0007669"/>
    <property type="project" value="UniProtKB-KW"/>
</dbReference>
<dbReference type="GO" id="GO:0000086">
    <property type="term" value="P:G2/M transition of mitotic cell cycle"/>
    <property type="evidence" value="ECO:0000250"/>
    <property type="project" value="UniProtKB"/>
</dbReference>
<dbReference type="GO" id="GO:0007095">
    <property type="term" value="P:mitotic G2 DNA damage checkpoint signaling"/>
    <property type="evidence" value="ECO:0000318"/>
    <property type="project" value="GO_Central"/>
</dbReference>
<dbReference type="GO" id="GO:0042752">
    <property type="term" value="P:regulation of circadian rhythm"/>
    <property type="evidence" value="ECO:0000250"/>
    <property type="project" value="UniProtKB"/>
</dbReference>
<dbReference type="CDD" id="cd07861">
    <property type="entry name" value="STKc_CDK1_euk"/>
    <property type="match status" value="1"/>
</dbReference>
<dbReference type="FunFam" id="1.10.510.10:FF:000231">
    <property type="entry name" value="Cyclin-dependent kinase 1"/>
    <property type="match status" value="1"/>
</dbReference>
<dbReference type="FunFam" id="3.30.200.20:FF:000027">
    <property type="entry name" value="Putative Cyclin-dependent kinase 1"/>
    <property type="match status" value="1"/>
</dbReference>
<dbReference type="Gene3D" id="3.30.200.20">
    <property type="entry name" value="Phosphorylase Kinase, domain 1"/>
    <property type="match status" value="1"/>
</dbReference>
<dbReference type="Gene3D" id="1.10.510.10">
    <property type="entry name" value="Transferase(Phosphotransferase) domain 1"/>
    <property type="match status" value="1"/>
</dbReference>
<dbReference type="InterPro" id="IPR050108">
    <property type="entry name" value="CDK"/>
</dbReference>
<dbReference type="InterPro" id="IPR011009">
    <property type="entry name" value="Kinase-like_dom_sf"/>
</dbReference>
<dbReference type="InterPro" id="IPR000719">
    <property type="entry name" value="Prot_kinase_dom"/>
</dbReference>
<dbReference type="InterPro" id="IPR017441">
    <property type="entry name" value="Protein_kinase_ATP_BS"/>
</dbReference>
<dbReference type="InterPro" id="IPR008271">
    <property type="entry name" value="Ser/Thr_kinase_AS"/>
</dbReference>
<dbReference type="PANTHER" id="PTHR24056">
    <property type="entry name" value="CELL DIVISION PROTEIN KINASE"/>
    <property type="match status" value="1"/>
</dbReference>
<dbReference type="PANTHER" id="PTHR24056:SF334">
    <property type="entry name" value="CYCLIN-DEPENDENT KINASE 1"/>
    <property type="match status" value="1"/>
</dbReference>
<dbReference type="Pfam" id="PF00069">
    <property type="entry name" value="Pkinase"/>
    <property type="match status" value="1"/>
</dbReference>
<dbReference type="SMART" id="SM00220">
    <property type="entry name" value="S_TKc"/>
    <property type="match status" value="1"/>
</dbReference>
<dbReference type="SUPFAM" id="SSF56112">
    <property type="entry name" value="Protein kinase-like (PK-like)"/>
    <property type="match status" value="1"/>
</dbReference>
<dbReference type="PROSITE" id="PS00107">
    <property type="entry name" value="PROTEIN_KINASE_ATP"/>
    <property type="match status" value="1"/>
</dbReference>
<dbReference type="PROSITE" id="PS50011">
    <property type="entry name" value="PROTEIN_KINASE_DOM"/>
    <property type="match status" value="1"/>
</dbReference>
<dbReference type="PROSITE" id="PS00108">
    <property type="entry name" value="PROTEIN_KINASE_ST"/>
    <property type="match status" value="1"/>
</dbReference>